<gene>
    <name evidence="1" type="primary">buk</name>
    <name type="ordered locus">LMHCC_1201</name>
</gene>
<name>BUK_LISMH</name>
<sequence length="355" mass="38955">MSFDVLTINPGSTSTKLAVYQGDKVLFEETVRHTMQELADFNNVQEQFDFRWQVLRRVMDAHGYDVKNLQAVVGRGGLLRPVAGGTYMVTEKMIDDLKENKYGEHASNLGAMLAKKLADELTIPSFIVDPVVVDEMQEIARISGNAFVARKSIFHALNHKAAGRKIAKELGNDYEKMNFVIAHLGGGISVAAHRQGRVVDVNNALDGDGPFSPERSGSLPMNDFLEACFSGKWTKRELHELIVGRGGMISYLGTNSMLEVEAKVQAGDVKAMEAFDAMAYQVSKEIGACSVVLQGKIDAIILTGGLARSELFTSKIIEQTNWITSVIIEPGEDELEALNSGVQRVLAGLEKEKEY</sequence>
<comment type="catalytic activity">
    <reaction evidence="1">
        <text>butanoate + ATP = butanoyl phosphate + ADP</text>
        <dbReference type="Rhea" id="RHEA:13585"/>
        <dbReference type="ChEBI" id="CHEBI:17968"/>
        <dbReference type="ChEBI" id="CHEBI:30616"/>
        <dbReference type="ChEBI" id="CHEBI:58079"/>
        <dbReference type="ChEBI" id="CHEBI:456216"/>
        <dbReference type="EC" id="2.7.2.7"/>
    </reaction>
</comment>
<comment type="subcellular location">
    <subcellularLocation>
        <location evidence="1">Cytoplasm</location>
    </subcellularLocation>
</comment>
<comment type="similarity">
    <text evidence="1">Belongs to the acetokinase family.</text>
</comment>
<proteinExistence type="inferred from homology"/>
<keyword id="KW-0067">ATP-binding</keyword>
<keyword id="KW-0963">Cytoplasm</keyword>
<keyword id="KW-0418">Kinase</keyword>
<keyword id="KW-0547">Nucleotide-binding</keyword>
<keyword id="KW-0808">Transferase</keyword>
<feature type="chain" id="PRO_1000146590" description="Probable butyrate kinase">
    <location>
        <begin position="1"/>
        <end position="355"/>
    </location>
</feature>
<dbReference type="EC" id="2.7.2.7" evidence="1"/>
<dbReference type="EMBL" id="CP001175">
    <property type="protein sequence ID" value="ACK39548.1"/>
    <property type="molecule type" value="Genomic_DNA"/>
</dbReference>
<dbReference type="RefSeq" id="WP_012581357.1">
    <property type="nucleotide sequence ID" value="NC_011660.1"/>
</dbReference>
<dbReference type="SMR" id="B8DFV8"/>
<dbReference type="KEGG" id="lmh:LMHCC_1201"/>
<dbReference type="HOGENOM" id="CLU_048716_0_0_9"/>
<dbReference type="GO" id="GO:0005737">
    <property type="term" value="C:cytoplasm"/>
    <property type="evidence" value="ECO:0007669"/>
    <property type="project" value="UniProtKB-SubCell"/>
</dbReference>
<dbReference type="GO" id="GO:0008776">
    <property type="term" value="F:acetate kinase activity"/>
    <property type="evidence" value="ECO:0007669"/>
    <property type="project" value="TreeGrafter"/>
</dbReference>
<dbReference type="GO" id="GO:0005524">
    <property type="term" value="F:ATP binding"/>
    <property type="evidence" value="ECO:0007669"/>
    <property type="project" value="UniProtKB-KW"/>
</dbReference>
<dbReference type="GO" id="GO:0047761">
    <property type="term" value="F:butyrate kinase activity"/>
    <property type="evidence" value="ECO:0007669"/>
    <property type="project" value="UniProtKB-UniRule"/>
</dbReference>
<dbReference type="GO" id="GO:0006083">
    <property type="term" value="P:acetate metabolic process"/>
    <property type="evidence" value="ECO:0007669"/>
    <property type="project" value="TreeGrafter"/>
</dbReference>
<dbReference type="CDD" id="cd24011">
    <property type="entry name" value="ASKHA_NBD_BK"/>
    <property type="match status" value="1"/>
</dbReference>
<dbReference type="FunFam" id="3.30.420.40:FF:000233">
    <property type="entry name" value="Probable butyrate kinase"/>
    <property type="match status" value="1"/>
</dbReference>
<dbReference type="Gene3D" id="3.30.420.40">
    <property type="match status" value="2"/>
</dbReference>
<dbReference type="HAMAP" id="MF_00542">
    <property type="entry name" value="Butyrate_kinase"/>
    <property type="match status" value="1"/>
</dbReference>
<dbReference type="InterPro" id="IPR000890">
    <property type="entry name" value="Aliphatic_acid_kin_short-chain"/>
</dbReference>
<dbReference type="InterPro" id="IPR023865">
    <property type="entry name" value="Aliphatic_acid_kinase_CS"/>
</dbReference>
<dbReference type="InterPro" id="IPR043129">
    <property type="entry name" value="ATPase_NBD"/>
</dbReference>
<dbReference type="InterPro" id="IPR011245">
    <property type="entry name" value="Butyrate_kin"/>
</dbReference>
<dbReference type="NCBIfam" id="TIGR02707">
    <property type="entry name" value="butyr_kinase"/>
    <property type="match status" value="1"/>
</dbReference>
<dbReference type="NCBIfam" id="NF002834">
    <property type="entry name" value="PRK03011.1-5"/>
    <property type="match status" value="1"/>
</dbReference>
<dbReference type="PANTHER" id="PTHR21060">
    <property type="entry name" value="ACETATE KINASE"/>
    <property type="match status" value="1"/>
</dbReference>
<dbReference type="PANTHER" id="PTHR21060:SF3">
    <property type="entry name" value="BUTYRATE KINASE 2-RELATED"/>
    <property type="match status" value="1"/>
</dbReference>
<dbReference type="Pfam" id="PF00871">
    <property type="entry name" value="Acetate_kinase"/>
    <property type="match status" value="1"/>
</dbReference>
<dbReference type="PIRSF" id="PIRSF036458">
    <property type="entry name" value="Butyrate_kin"/>
    <property type="match status" value="1"/>
</dbReference>
<dbReference type="PRINTS" id="PR00471">
    <property type="entry name" value="ACETATEKNASE"/>
</dbReference>
<dbReference type="SUPFAM" id="SSF53067">
    <property type="entry name" value="Actin-like ATPase domain"/>
    <property type="match status" value="2"/>
</dbReference>
<dbReference type="PROSITE" id="PS01075">
    <property type="entry name" value="ACETATE_KINASE_1"/>
    <property type="match status" value="1"/>
</dbReference>
<dbReference type="PROSITE" id="PS01076">
    <property type="entry name" value="ACETATE_KINASE_2"/>
    <property type="match status" value="1"/>
</dbReference>
<reference key="1">
    <citation type="journal article" date="2011" name="J. Bacteriol.">
        <title>Genome sequence of lineage III Listeria monocytogenes strain HCC23.</title>
        <authorList>
            <person name="Steele C.L."/>
            <person name="Donaldson J.R."/>
            <person name="Paul D."/>
            <person name="Banes M.M."/>
            <person name="Arick T."/>
            <person name="Bridges S.M."/>
            <person name="Lawrence M.L."/>
        </authorList>
    </citation>
    <scope>NUCLEOTIDE SEQUENCE [LARGE SCALE GENOMIC DNA]</scope>
    <source>
        <strain>HCC23</strain>
    </source>
</reference>
<accession>B8DFV8</accession>
<organism>
    <name type="scientific">Listeria monocytogenes serotype 4a (strain HCC23)</name>
    <dbReference type="NCBI Taxonomy" id="552536"/>
    <lineage>
        <taxon>Bacteria</taxon>
        <taxon>Bacillati</taxon>
        <taxon>Bacillota</taxon>
        <taxon>Bacilli</taxon>
        <taxon>Bacillales</taxon>
        <taxon>Listeriaceae</taxon>
        <taxon>Listeria</taxon>
    </lineage>
</organism>
<evidence type="ECO:0000255" key="1">
    <source>
        <dbReference type="HAMAP-Rule" id="MF_00542"/>
    </source>
</evidence>
<protein>
    <recommendedName>
        <fullName evidence="1">Probable butyrate kinase</fullName>
        <shortName evidence="1">BK</shortName>
        <ecNumber evidence="1">2.7.2.7</ecNumber>
    </recommendedName>
    <alternativeName>
        <fullName evidence="1">Branched-chain carboxylic acid kinase</fullName>
    </alternativeName>
</protein>